<gene>
    <name evidence="1" type="primary">pfdB</name>
    <name type="ordered locus">UNCMA_09880</name>
    <name type="ORF">RCIX2129</name>
</gene>
<keyword id="KW-0143">Chaperone</keyword>
<keyword id="KW-0963">Cytoplasm</keyword>
<keyword id="KW-1185">Reference proteome</keyword>
<reference key="1">
    <citation type="journal article" date="2006" name="Science">
        <title>Genome of rice cluster I archaea -- the key methane producers in the rice rhizosphere.</title>
        <authorList>
            <person name="Erkel C."/>
            <person name="Kube M."/>
            <person name="Reinhardt R."/>
            <person name="Liesack W."/>
        </authorList>
    </citation>
    <scope>NUCLEOTIDE SEQUENCE [LARGE SCALE GENOMIC DNA]</scope>
    <source>
        <strain>DSM 22066 / NBRC 105507 / MRE50</strain>
    </source>
</reference>
<proteinExistence type="inferred from homology"/>
<comment type="function">
    <text evidence="1">Molecular chaperone capable of stabilizing a range of proteins. Seems to fulfill an ATP-independent, HSP70-like function in archaeal de novo protein folding.</text>
</comment>
<comment type="subunit">
    <text evidence="1">Heterohexamer of two alpha and four beta subunits.</text>
</comment>
<comment type="subcellular location">
    <subcellularLocation>
        <location evidence="1">Cytoplasm</location>
    </subcellularLocation>
</comment>
<comment type="similarity">
    <text evidence="1">Belongs to the prefoldin subunit beta family.</text>
</comment>
<feature type="chain" id="PRO_0000300779" description="Prefoldin subunit beta">
    <location>
        <begin position="1"/>
        <end position="126"/>
    </location>
</feature>
<protein>
    <recommendedName>
        <fullName evidence="1">Prefoldin subunit beta</fullName>
    </recommendedName>
    <alternativeName>
        <fullName evidence="1">GimC subunit beta</fullName>
    </alternativeName>
</protein>
<name>PFDB_METAR</name>
<evidence type="ECO:0000255" key="1">
    <source>
        <dbReference type="HAMAP-Rule" id="MF_00307"/>
    </source>
</evidence>
<sequence>MNELPPQIQNQLAQIQQVQQQAQALMQQKAQVEMLLRETERAFEELQKTEEGAEVYKGAGELLIKAKREDVLKDLEEKKDNFDVRLKSLSRQEERLQSRFNQLQEQLKSALGKMQGQGPATGGRAE</sequence>
<organism>
    <name type="scientific">Methanocella arvoryzae (strain DSM 22066 / NBRC 105507 / MRE50)</name>
    <dbReference type="NCBI Taxonomy" id="351160"/>
    <lineage>
        <taxon>Archaea</taxon>
        <taxon>Methanobacteriati</taxon>
        <taxon>Methanobacteriota</taxon>
        <taxon>Stenosarchaea group</taxon>
        <taxon>Methanomicrobia</taxon>
        <taxon>Methanocellales</taxon>
        <taxon>Methanocellaceae</taxon>
        <taxon>Methanocella</taxon>
    </lineage>
</organism>
<accession>Q0W2Y3</accession>
<dbReference type="EMBL" id="AM114193">
    <property type="protein sequence ID" value="CAJ37260.1"/>
    <property type="molecule type" value="Genomic_DNA"/>
</dbReference>
<dbReference type="RefSeq" id="WP_012035316.1">
    <property type="nucleotide sequence ID" value="NC_009464.1"/>
</dbReference>
<dbReference type="SMR" id="Q0W2Y3"/>
<dbReference type="STRING" id="351160.RCIX2129"/>
<dbReference type="GeneID" id="5142746"/>
<dbReference type="KEGG" id="rci:RCIX2129"/>
<dbReference type="eggNOG" id="arCOG01342">
    <property type="taxonomic scope" value="Archaea"/>
</dbReference>
<dbReference type="OrthoDB" id="204796at2157"/>
<dbReference type="Proteomes" id="UP000000663">
    <property type="component" value="Chromosome"/>
</dbReference>
<dbReference type="GO" id="GO:0005737">
    <property type="term" value="C:cytoplasm"/>
    <property type="evidence" value="ECO:0007669"/>
    <property type="project" value="UniProtKB-SubCell"/>
</dbReference>
<dbReference type="GO" id="GO:0016272">
    <property type="term" value="C:prefoldin complex"/>
    <property type="evidence" value="ECO:0007669"/>
    <property type="project" value="UniProtKB-UniRule"/>
</dbReference>
<dbReference type="GO" id="GO:0051082">
    <property type="term" value="F:unfolded protein binding"/>
    <property type="evidence" value="ECO:0007669"/>
    <property type="project" value="UniProtKB-UniRule"/>
</dbReference>
<dbReference type="GO" id="GO:0006457">
    <property type="term" value="P:protein folding"/>
    <property type="evidence" value="ECO:0007669"/>
    <property type="project" value="UniProtKB-UniRule"/>
</dbReference>
<dbReference type="CDD" id="cd23162">
    <property type="entry name" value="Prefoldin_beta_GimC"/>
    <property type="match status" value="1"/>
</dbReference>
<dbReference type="Gene3D" id="1.10.287.370">
    <property type="match status" value="1"/>
</dbReference>
<dbReference type="HAMAP" id="MF_00307">
    <property type="entry name" value="PfdB"/>
    <property type="match status" value="1"/>
</dbReference>
<dbReference type="InterPro" id="IPR002777">
    <property type="entry name" value="PFD_beta-like"/>
</dbReference>
<dbReference type="InterPro" id="IPR012713">
    <property type="entry name" value="PfdB"/>
</dbReference>
<dbReference type="InterPro" id="IPR009053">
    <property type="entry name" value="Prefoldin"/>
</dbReference>
<dbReference type="NCBIfam" id="TIGR02338">
    <property type="entry name" value="gimC_beta"/>
    <property type="match status" value="1"/>
</dbReference>
<dbReference type="Pfam" id="PF01920">
    <property type="entry name" value="Prefoldin_2"/>
    <property type="match status" value="1"/>
</dbReference>
<dbReference type="SUPFAM" id="SSF46579">
    <property type="entry name" value="Prefoldin"/>
    <property type="match status" value="1"/>
</dbReference>